<organism>
    <name type="scientific">Pseudomonas entomophila (strain L48)</name>
    <dbReference type="NCBI Taxonomy" id="384676"/>
    <lineage>
        <taxon>Bacteria</taxon>
        <taxon>Pseudomonadati</taxon>
        <taxon>Pseudomonadota</taxon>
        <taxon>Gammaproteobacteria</taxon>
        <taxon>Pseudomonadales</taxon>
        <taxon>Pseudomonadaceae</taxon>
        <taxon>Pseudomonas</taxon>
    </lineage>
</organism>
<gene>
    <name evidence="1" type="primary">betB</name>
    <name type="ordered locus">PSEEN0373</name>
</gene>
<proteinExistence type="inferred from homology"/>
<protein>
    <recommendedName>
        <fullName evidence="1">Betaine aldehyde dehydrogenase</fullName>
        <shortName evidence="1">BADH</shortName>
        <ecNumber evidence="1">1.2.1.8</ecNumber>
    </recommendedName>
</protein>
<reference key="1">
    <citation type="journal article" date="2006" name="Nat. Biotechnol.">
        <title>Complete genome sequence of the entomopathogenic and metabolically versatile soil bacterium Pseudomonas entomophila.</title>
        <authorList>
            <person name="Vodovar N."/>
            <person name="Vallenet D."/>
            <person name="Cruveiller S."/>
            <person name="Rouy Z."/>
            <person name="Barbe V."/>
            <person name="Acosta C."/>
            <person name="Cattolico L."/>
            <person name="Jubin C."/>
            <person name="Lajus A."/>
            <person name="Segurens B."/>
            <person name="Vacherie B."/>
            <person name="Wincker P."/>
            <person name="Weissenbach J."/>
            <person name="Lemaitre B."/>
            <person name="Medigue C."/>
            <person name="Boccard F."/>
        </authorList>
    </citation>
    <scope>NUCLEOTIDE SEQUENCE [LARGE SCALE GENOMIC DNA]</scope>
    <source>
        <strain>L48</strain>
    </source>
</reference>
<comment type="function">
    <text evidence="1">Involved in the biosynthesis of the osmoprotectant glycine betaine. Catalyzes the irreversible oxidation of betaine aldehyde to the corresponding acid.</text>
</comment>
<comment type="catalytic activity">
    <reaction evidence="1">
        <text>betaine aldehyde + NAD(+) + H2O = glycine betaine + NADH + 2 H(+)</text>
        <dbReference type="Rhea" id="RHEA:15305"/>
        <dbReference type="ChEBI" id="CHEBI:15377"/>
        <dbReference type="ChEBI" id="CHEBI:15378"/>
        <dbReference type="ChEBI" id="CHEBI:15710"/>
        <dbReference type="ChEBI" id="CHEBI:17750"/>
        <dbReference type="ChEBI" id="CHEBI:57540"/>
        <dbReference type="ChEBI" id="CHEBI:57945"/>
        <dbReference type="EC" id="1.2.1.8"/>
    </reaction>
    <physiologicalReaction direction="left-to-right" evidence="1">
        <dbReference type="Rhea" id="RHEA:15306"/>
    </physiologicalReaction>
</comment>
<comment type="cofactor">
    <cofactor evidence="1">
        <name>K(+)</name>
        <dbReference type="ChEBI" id="CHEBI:29103"/>
    </cofactor>
    <text evidence="1">Binds 2 potassium ions per subunit.</text>
</comment>
<comment type="pathway">
    <text evidence="1">Amine and polyamine biosynthesis; betaine biosynthesis via choline pathway; betaine from betaine aldehyde: step 1/1.</text>
</comment>
<comment type="subunit">
    <text evidence="1">Dimer of dimers.</text>
</comment>
<comment type="similarity">
    <text evidence="1">Belongs to the aldehyde dehydrogenase family.</text>
</comment>
<sequence>MARFGTQKLYIDGAYVDAGSDATFEAINPATGEVLAHVQRATQADVEKAVESAERGQKVWAAMTAMQRSRILRRAVDILRERNDELAMLETLDTGKSYSETRYVDIVTGADVLEYYAGLVPAIEGEQIPLRESSFVYTRREPLGVTVGIGAWNYPIQIALWKSAPALAAGNAMIFKPSEVTSLTTLKLAEIFTEAGLPNGVFNVLTGSGREVGTWLTEHPRIEKVSFTGGTTTGKKVMASASSSSLKEVTMELGGKSPLIICDDADLDKAADIAMMANFYSSGQVCTNGTRVFVPAAMKAAFEAKIAERVARIRAGNPEDENTNFGPLVSFQHMESVLSYIAKGKEEGARVLCGGERLTAGDFAKGAFVAPTVFTDCTDDMTIVKEEIFGPVMSILSYETEEEVIRRANDTEYGLAAGVCTNDISRAHRIIHKLEAGICWINAWGESPAEMPVGGYKQSGVGRENGVSSLAQYTRIKSVQVELGGYNSVF</sequence>
<dbReference type="EC" id="1.2.1.8" evidence="1"/>
<dbReference type="EMBL" id="CT573326">
    <property type="protein sequence ID" value="CAK13333.1"/>
    <property type="molecule type" value="Genomic_DNA"/>
</dbReference>
<dbReference type="RefSeq" id="WP_011531793.1">
    <property type="nucleotide sequence ID" value="NC_008027.1"/>
</dbReference>
<dbReference type="SMR" id="Q1IG69"/>
<dbReference type="STRING" id="384676.PSEEN0373"/>
<dbReference type="GeneID" id="32803714"/>
<dbReference type="KEGG" id="pen:PSEEN0373"/>
<dbReference type="eggNOG" id="COG1012">
    <property type="taxonomic scope" value="Bacteria"/>
</dbReference>
<dbReference type="HOGENOM" id="CLU_005391_0_0_6"/>
<dbReference type="OrthoDB" id="9812625at2"/>
<dbReference type="UniPathway" id="UPA00529">
    <property type="reaction ID" value="UER00386"/>
</dbReference>
<dbReference type="Proteomes" id="UP000000658">
    <property type="component" value="Chromosome"/>
</dbReference>
<dbReference type="GO" id="GO:0008802">
    <property type="term" value="F:betaine-aldehyde dehydrogenase (NAD+) activity"/>
    <property type="evidence" value="ECO:0007669"/>
    <property type="project" value="UniProtKB-UniRule"/>
</dbReference>
<dbReference type="GO" id="GO:0046872">
    <property type="term" value="F:metal ion binding"/>
    <property type="evidence" value="ECO:0007669"/>
    <property type="project" value="UniProtKB-KW"/>
</dbReference>
<dbReference type="GO" id="GO:0019285">
    <property type="term" value="P:glycine betaine biosynthetic process from choline"/>
    <property type="evidence" value="ECO:0007669"/>
    <property type="project" value="UniProtKB-UniRule"/>
</dbReference>
<dbReference type="CDD" id="cd07090">
    <property type="entry name" value="ALDH_F9_TMBADH"/>
    <property type="match status" value="1"/>
</dbReference>
<dbReference type="FunFam" id="3.40.309.10:FF:000014">
    <property type="entry name" value="NAD/NADP-dependent betaine aldehyde dehydrogenase"/>
    <property type="match status" value="1"/>
</dbReference>
<dbReference type="FunFam" id="3.40.605.10:FF:000007">
    <property type="entry name" value="NAD/NADP-dependent betaine aldehyde dehydrogenase"/>
    <property type="match status" value="1"/>
</dbReference>
<dbReference type="Gene3D" id="3.40.605.10">
    <property type="entry name" value="Aldehyde Dehydrogenase, Chain A, domain 1"/>
    <property type="match status" value="1"/>
</dbReference>
<dbReference type="Gene3D" id="3.40.309.10">
    <property type="entry name" value="Aldehyde Dehydrogenase, Chain A, domain 2"/>
    <property type="match status" value="1"/>
</dbReference>
<dbReference type="HAMAP" id="MF_00804">
    <property type="entry name" value="BADH"/>
    <property type="match status" value="1"/>
</dbReference>
<dbReference type="InterPro" id="IPR016161">
    <property type="entry name" value="Ald_DH/histidinol_DH"/>
</dbReference>
<dbReference type="InterPro" id="IPR016163">
    <property type="entry name" value="Ald_DH_C"/>
</dbReference>
<dbReference type="InterPro" id="IPR016160">
    <property type="entry name" value="Ald_DH_CS_CYS"/>
</dbReference>
<dbReference type="InterPro" id="IPR029510">
    <property type="entry name" value="Ald_DH_CS_GLU"/>
</dbReference>
<dbReference type="InterPro" id="IPR016162">
    <property type="entry name" value="Ald_DH_N"/>
</dbReference>
<dbReference type="InterPro" id="IPR015590">
    <property type="entry name" value="Aldehyde_DH_dom"/>
</dbReference>
<dbReference type="InterPro" id="IPR011264">
    <property type="entry name" value="BADH"/>
</dbReference>
<dbReference type="NCBIfam" id="TIGR01804">
    <property type="entry name" value="BADH"/>
    <property type="match status" value="1"/>
</dbReference>
<dbReference type="NCBIfam" id="NF009725">
    <property type="entry name" value="PRK13252.1"/>
    <property type="match status" value="1"/>
</dbReference>
<dbReference type="PANTHER" id="PTHR11699">
    <property type="entry name" value="ALDEHYDE DEHYDROGENASE-RELATED"/>
    <property type="match status" value="1"/>
</dbReference>
<dbReference type="Pfam" id="PF00171">
    <property type="entry name" value="Aldedh"/>
    <property type="match status" value="1"/>
</dbReference>
<dbReference type="SUPFAM" id="SSF53720">
    <property type="entry name" value="ALDH-like"/>
    <property type="match status" value="1"/>
</dbReference>
<dbReference type="PROSITE" id="PS00070">
    <property type="entry name" value="ALDEHYDE_DEHYDR_CYS"/>
    <property type="match status" value="1"/>
</dbReference>
<dbReference type="PROSITE" id="PS00687">
    <property type="entry name" value="ALDEHYDE_DEHYDR_GLU"/>
    <property type="match status" value="1"/>
</dbReference>
<name>BETB_PSEE4</name>
<feature type="chain" id="PRO_1000047047" description="Betaine aldehyde dehydrogenase">
    <location>
        <begin position="1"/>
        <end position="490"/>
    </location>
</feature>
<feature type="active site" description="Charge relay system" evidence="1">
    <location>
        <position position="162"/>
    </location>
</feature>
<feature type="active site" description="Proton acceptor" evidence="1">
    <location>
        <position position="252"/>
    </location>
</feature>
<feature type="active site" description="Nucleophile" evidence="1">
    <location>
        <position position="286"/>
    </location>
</feature>
<feature type="active site" description="Charge relay system" evidence="1">
    <location>
        <position position="464"/>
    </location>
</feature>
<feature type="binding site" evidence="1">
    <location>
        <position position="27"/>
    </location>
    <ligand>
        <name>K(+)</name>
        <dbReference type="ChEBI" id="CHEBI:29103"/>
        <label>1</label>
    </ligand>
</feature>
<feature type="binding site" evidence="1">
    <location>
        <position position="93"/>
    </location>
    <ligand>
        <name>K(+)</name>
        <dbReference type="ChEBI" id="CHEBI:29103"/>
        <label>1</label>
    </ligand>
</feature>
<feature type="binding site" evidence="1">
    <location>
        <begin position="150"/>
        <end position="152"/>
    </location>
    <ligand>
        <name>NAD(+)</name>
        <dbReference type="ChEBI" id="CHEBI:57540"/>
    </ligand>
</feature>
<feature type="binding site" evidence="1">
    <location>
        <begin position="176"/>
        <end position="179"/>
    </location>
    <ligand>
        <name>NAD(+)</name>
        <dbReference type="ChEBI" id="CHEBI:57540"/>
    </ligand>
</feature>
<feature type="binding site" evidence="1">
    <location>
        <position position="180"/>
    </location>
    <ligand>
        <name>K(+)</name>
        <dbReference type="ChEBI" id="CHEBI:29103"/>
        <label>1</label>
    </ligand>
</feature>
<feature type="binding site" evidence="1">
    <location>
        <begin position="230"/>
        <end position="233"/>
    </location>
    <ligand>
        <name>NAD(+)</name>
        <dbReference type="ChEBI" id="CHEBI:57540"/>
    </ligand>
</feature>
<feature type="binding site" evidence="1">
    <location>
        <position position="246"/>
    </location>
    <ligand>
        <name>K(+)</name>
        <dbReference type="ChEBI" id="CHEBI:29103"/>
        <label>2</label>
    </ligand>
</feature>
<feature type="binding site" evidence="1">
    <location>
        <position position="254"/>
    </location>
    <ligand>
        <name>NAD(+)</name>
        <dbReference type="ChEBI" id="CHEBI:57540"/>
    </ligand>
</feature>
<feature type="binding site" description="covalent" evidence="1">
    <location>
        <position position="286"/>
    </location>
    <ligand>
        <name>NAD(+)</name>
        <dbReference type="ChEBI" id="CHEBI:57540"/>
    </ligand>
</feature>
<feature type="binding site" evidence="1">
    <location>
        <position position="387"/>
    </location>
    <ligand>
        <name>NAD(+)</name>
        <dbReference type="ChEBI" id="CHEBI:57540"/>
    </ligand>
</feature>
<feature type="binding site" evidence="1">
    <location>
        <position position="457"/>
    </location>
    <ligand>
        <name>K(+)</name>
        <dbReference type="ChEBI" id="CHEBI:29103"/>
        <label>2</label>
    </ligand>
</feature>
<feature type="binding site" evidence="1">
    <location>
        <position position="460"/>
    </location>
    <ligand>
        <name>K(+)</name>
        <dbReference type="ChEBI" id="CHEBI:29103"/>
        <label>2</label>
    </ligand>
</feature>
<feature type="site" description="Seems to be a necessary countercharge to the potassium cations" evidence="1">
    <location>
        <position position="248"/>
    </location>
</feature>
<feature type="modified residue" description="Cysteine sulfenic acid (-SOH)" evidence="1">
    <location>
        <position position="286"/>
    </location>
</feature>
<accession>Q1IG69</accession>
<evidence type="ECO:0000255" key="1">
    <source>
        <dbReference type="HAMAP-Rule" id="MF_00804"/>
    </source>
</evidence>
<keyword id="KW-0479">Metal-binding</keyword>
<keyword id="KW-0520">NAD</keyword>
<keyword id="KW-0521">NADP</keyword>
<keyword id="KW-0558">Oxidation</keyword>
<keyword id="KW-0560">Oxidoreductase</keyword>
<keyword id="KW-0630">Potassium</keyword>